<accession>Q3IZH6</accession>
<keyword id="KW-0648">Protein biosynthesis</keyword>
<keyword id="KW-1185">Reference proteome</keyword>
<keyword id="KW-0808">Transferase</keyword>
<sequence>MRLIFMGSPDFSVPVLEALHAHHEVVCVYCQPPRPAGRGKKDRPTPVQTRAEELGLPVRHPTSLRTPEAQAEFAALGAEAAVVVAYGLILPQPILDAPERGCLNIHASLLPRWRGAAPIHRAILAGDEETGICIMQMEAGLDTGPVLMCEKTHIGPEETVQDLHDRLSDMGARLILGALGALDDLVPCPQPDAGVTYAEKIAKAEAGIDWTRPATEIDRQIRGLSPFPGAWTLLNGERVKLLRCRLAEGHGAPGAVLGGLTIACGTGAVEITLAQREGKRPMEPEEFLRGFPLPEGSRAHTS</sequence>
<comment type="function">
    <text evidence="1">Attaches a formyl group to the free amino group of methionyl-tRNA(fMet). The formyl group appears to play a dual role in the initiator identity of N-formylmethionyl-tRNA by promoting its recognition by IF2 and preventing the misappropriation of this tRNA by the elongation apparatus.</text>
</comment>
<comment type="catalytic activity">
    <reaction evidence="1">
        <text>L-methionyl-tRNA(fMet) + (6R)-10-formyltetrahydrofolate = N-formyl-L-methionyl-tRNA(fMet) + (6S)-5,6,7,8-tetrahydrofolate + H(+)</text>
        <dbReference type="Rhea" id="RHEA:24380"/>
        <dbReference type="Rhea" id="RHEA-COMP:9952"/>
        <dbReference type="Rhea" id="RHEA-COMP:9953"/>
        <dbReference type="ChEBI" id="CHEBI:15378"/>
        <dbReference type="ChEBI" id="CHEBI:57453"/>
        <dbReference type="ChEBI" id="CHEBI:78530"/>
        <dbReference type="ChEBI" id="CHEBI:78844"/>
        <dbReference type="ChEBI" id="CHEBI:195366"/>
        <dbReference type="EC" id="2.1.2.9"/>
    </reaction>
</comment>
<comment type="similarity">
    <text evidence="1">Belongs to the Fmt family.</text>
</comment>
<proteinExistence type="inferred from homology"/>
<organism>
    <name type="scientific">Cereibacter sphaeroides (strain ATCC 17023 / DSM 158 / JCM 6121 / CCUG 31486 / LMG 2827 / NBRC 12203 / NCIMB 8253 / ATH 2.4.1.)</name>
    <name type="common">Rhodobacter sphaeroides</name>
    <dbReference type="NCBI Taxonomy" id="272943"/>
    <lineage>
        <taxon>Bacteria</taxon>
        <taxon>Pseudomonadati</taxon>
        <taxon>Pseudomonadota</taxon>
        <taxon>Alphaproteobacteria</taxon>
        <taxon>Rhodobacterales</taxon>
        <taxon>Paracoccaceae</taxon>
        <taxon>Cereibacter</taxon>
    </lineage>
</organism>
<feature type="chain" id="PRO_1000020145" description="Methionyl-tRNA formyltransferase">
    <location>
        <begin position="1"/>
        <end position="302"/>
    </location>
</feature>
<feature type="region of interest" description="Disordered" evidence="2">
    <location>
        <begin position="279"/>
        <end position="302"/>
    </location>
</feature>
<feature type="compositionally biased region" description="Basic and acidic residues" evidence="2">
    <location>
        <begin position="279"/>
        <end position="288"/>
    </location>
</feature>
<feature type="binding site" evidence="1">
    <location>
        <begin position="108"/>
        <end position="111"/>
    </location>
    <ligand>
        <name>(6S)-5,6,7,8-tetrahydrofolate</name>
        <dbReference type="ChEBI" id="CHEBI:57453"/>
    </ligand>
</feature>
<protein>
    <recommendedName>
        <fullName evidence="1">Methionyl-tRNA formyltransferase</fullName>
        <ecNumber evidence="1">2.1.2.9</ecNumber>
    </recommendedName>
</protein>
<evidence type="ECO:0000255" key="1">
    <source>
        <dbReference type="HAMAP-Rule" id="MF_00182"/>
    </source>
</evidence>
<evidence type="ECO:0000256" key="2">
    <source>
        <dbReference type="SAM" id="MobiDB-lite"/>
    </source>
</evidence>
<reference key="1">
    <citation type="submission" date="2005-09" db="EMBL/GenBank/DDBJ databases">
        <title>Complete sequence of chromosome 1 of Rhodobacter sphaeroides 2.4.1.</title>
        <authorList>
            <person name="Copeland A."/>
            <person name="Lucas S."/>
            <person name="Lapidus A."/>
            <person name="Barry K."/>
            <person name="Detter J.C."/>
            <person name="Glavina T."/>
            <person name="Hammon N."/>
            <person name="Israni S."/>
            <person name="Pitluck S."/>
            <person name="Richardson P."/>
            <person name="Mackenzie C."/>
            <person name="Choudhary M."/>
            <person name="Larimer F."/>
            <person name="Hauser L.J."/>
            <person name="Land M."/>
            <person name="Donohue T.J."/>
            <person name="Kaplan S."/>
        </authorList>
    </citation>
    <scope>NUCLEOTIDE SEQUENCE [LARGE SCALE GENOMIC DNA]</scope>
    <source>
        <strain>ATCC 17023 / DSM 158 / JCM 6121 / CCUG 31486 / LMG 2827 / NBRC 12203 / NCIMB 8253 / ATH 2.4.1.</strain>
    </source>
</reference>
<dbReference type="EC" id="2.1.2.9" evidence="1"/>
<dbReference type="EMBL" id="CP000143">
    <property type="protein sequence ID" value="ABA80058.1"/>
    <property type="molecule type" value="Genomic_DNA"/>
</dbReference>
<dbReference type="RefSeq" id="WP_011338559.1">
    <property type="nucleotide sequence ID" value="NC_007493.2"/>
</dbReference>
<dbReference type="RefSeq" id="YP_353959.1">
    <property type="nucleotide sequence ID" value="NC_007493.2"/>
</dbReference>
<dbReference type="SMR" id="Q3IZH6"/>
<dbReference type="STRING" id="272943.RSP_0875"/>
<dbReference type="EnsemblBacteria" id="ABA80058">
    <property type="protein sequence ID" value="ABA80058"/>
    <property type="gene ID" value="RSP_0875"/>
</dbReference>
<dbReference type="GeneID" id="3718229"/>
<dbReference type="KEGG" id="rsp:RSP_0875"/>
<dbReference type="PATRIC" id="fig|272943.9.peg.2841"/>
<dbReference type="eggNOG" id="COG0223">
    <property type="taxonomic scope" value="Bacteria"/>
</dbReference>
<dbReference type="OrthoDB" id="9802815at2"/>
<dbReference type="PhylomeDB" id="Q3IZH6"/>
<dbReference type="Proteomes" id="UP000002703">
    <property type="component" value="Chromosome 1"/>
</dbReference>
<dbReference type="GO" id="GO:0005829">
    <property type="term" value="C:cytosol"/>
    <property type="evidence" value="ECO:0007669"/>
    <property type="project" value="TreeGrafter"/>
</dbReference>
<dbReference type="GO" id="GO:0004479">
    <property type="term" value="F:methionyl-tRNA formyltransferase activity"/>
    <property type="evidence" value="ECO:0007669"/>
    <property type="project" value="UniProtKB-UniRule"/>
</dbReference>
<dbReference type="CDD" id="cd08646">
    <property type="entry name" value="FMT_core_Met-tRNA-FMT_N"/>
    <property type="match status" value="1"/>
</dbReference>
<dbReference type="CDD" id="cd08704">
    <property type="entry name" value="Met_tRNA_FMT_C"/>
    <property type="match status" value="1"/>
</dbReference>
<dbReference type="FunFam" id="3.40.50.12230:FF:000001">
    <property type="entry name" value="Methionyl-tRNA formyltransferase"/>
    <property type="match status" value="1"/>
</dbReference>
<dbReference type="Gene3D" id="3.40.50.12230">
    <property type="match status" value="1"/>
</dbReference>
<dbReference type="HAMAP" id="MF_00182">
    <property type="entry name" value="Formyl_trans"/>
    <property type="match status" value="1"/>
</dbReference>
<dbReference type="InterPro" id="IPR005794">
    <property type="entry name" value="Fmt"/>
</dbReference>
<dbReference type="InterPro" id="IPR005793">
    <property type="entry name" value="Formyl_trans_C"/>
</dbReference>
<dbReference type="InterPro" id="IPR002376">
    <property type="entry name" value="Formyl_transf_N"/>
</dbReference>
<dbReference type="InterPro" id="IPR036477">
    <property type="entry name" value="Formyl_transf_N_sf"/>
</dbReference>
<dbReference type="InterPro" id="IPR011034">
    <property type="entry name" value="Formyl_transferase-like_C_sf"/>
</dbReference>
<dbReference type="InterPro" id="IPR001555">
    <property type="entry name" value="GART_AS"/>
</dbReference>
<dbReference type="InterPro" id="IPR044135">
    <property type="entry name" value="Met-tRNA-FMT_C"/>
</dbReference>
<dbReference type="InterPro" id="IPR041711">
    <property type="entry name" value="Met-tRNA-FMT_N"/>
</dbReference>
<dbReference type="NCBIfam" id="TIGR00460">
    <property type="entry name" value="fmt"/>
    <property type="match status" value="1"/>
</dbReference>
<dbReference type="PANTHER" id="PTHR11138">
    <property type="entry name" value="METHIONYL-TRNA FORMYLTRANSFERASE"/>
    <property type="match status" value="1"/>
</dbReference>
<dbReference type="PANTHER" id="PTHR11138:SF5">
    <property type="entry name" value="METHIONYL-TRNA FORMYLTRANSFERASE, MITOCHONDRIAL"/>
    <property type="match status" value="1"/>
</dbReference>
<dbReference type="Pfam" id="PF02911">
    <property type="entry name" value="Formyl_trans_C"/>
    <property type="match status" value="1"/>
</dbReference>
<dbReference type="Pfam" id="PF00551">
    <property type="entry name" value="Formyl_trans_N"/>
    <property type="match status" value="1"/>
</dbReference>
<dbReference type="SUPFAM" id="SSF50486">
    <property type="entry name" value="FMT C-terminal domain-like"/>
    <property type="match status" value="1"/>
</dbReference>
<dbReference type="SUPFAM" id="SSF53328">
    <property type="entry name" value="Formyltransferase"/>
    <property type="match status" value="1"/>
</dbReference>
<dbReference type="PROSITE" id="PS00373">
    <property type="entry name" value="GART"/>
    <property type="match status" value="1"/>
</dbReference>
<gene>
    <name evidence="1" type="primary">fmt</name>
    <name type="ordered locus">RHOS4_24900</name>
    <name type="ORF">RSP_0875</name>
</gene>
<name>FMT_CERS4</name>